<comment type="function">
    <text evidence="1">Catalyzes the NADPH-dependent formation of L-aspartate-semialdehyde (L-ASA) by the reductive dephosphorylation of L-aspartyl-4-phosphate.</text>
</comment>
<comment type="catalytic activity">
    <reaction evidence="1">
        <text>L-aspartate 4-semialdehyde + phosphate + NADP(+) = 4-phospho-L-aspartate + NADPH + H(+)</text>
        <dbReference type="Rhea" id="RHEA:24284"/>
        <dbReference type="ChEBI" id="CHEBI:15378"/>
        <dbReference type="ChEBI" id="CHEBI:43474"/>
        <dbReference type="ChEBI" id="CHEBI:57535"/>
        <dbReference type="ChEBI" id="CHEBI:57783"/>
        <dbReference type="ChEBI" id="CHEBI:58349"/>
        <dbReference type="ChEBI" id="CHEBI:537519"/>
        <dbReference type="EC" id="1.2.1.11"/>
    </reaction>
</comment>
<comment type="pathway">
    <text evidence="1">Amino-acid biosynthesis; L-lysine biosynthesis via DAP pathway; (S)-tetrahydrodipicolinate from L-aspartate: step 2/4.</text>
</comment>
<comment type="pathway">
    <text evidence="1">Amino-acid biosynthesis; L-methionine biosynthesis via de novo pathway; L-homoserine from L-aspartate: step 2/3.</text>
</comment>
<comment type="pathway">
    <text evidence="1">Amino-acid biosynthesis; L-threonine biosynthesis; L-threonine from L-aspartate: step 2/5.</text>
</comment>
<comment type="subunit">
    <text evidence="1">Homodimer.</text>
</comment>
<comment type="similarity">
    <text evidence="1">Belongs to the aspartate-semialdehyde dehydrogenase family.</text>
</comment>
<accession>P0C1D9</accession>
<accession>P26511</accession>
<accession>Q46062</accession>
<organism>
    <name type="scientific">Corynebacterium melassecola</name>
    <dbReference type="NCBI Taxonomy" id="41643"/>
    <lineage>
        <taxon>Bacteria</taxon>
        <taxon>Bacillati</taxon>
        <taxon>Actinomycetota</taxon>
        <taxon>Actinomycetes</taxon>
        <taxon>Mycobacteriales</taxon>
        <taxon>Corynebacteriaceae</taxon>
        <taxon>Corynebacterium</taxon>
    </lineage>
</organism>
<name>DHAS_CORML</name>
<evidence type="ECO:0000255" key="1">
    <source>
        <dbReference type="HAMAP-Rule" id="MF_02121"/>
    </source>
</evidence>
<feature type="chain" id="PRO_0000236032" description="Aspartate-semialdehyde dehydrogenase">
    <location>
        <begin position="1"/>
        <end position="344"/>
    </location>
</feature>
<feature type="active site" description="Acyl-thioester intermediate" evidence="1">
    <location>
        <position position="131"/>
    </location>
</feature>
<feature type="active site" description="Proton acceptor" evidence="1">
    <location>
        <position position="257"/>
    </location>
</feature>
<feature type="binding site" evidence="1">
    <location>
        <begin position="10"/>
        <end position="13"/>
    </location>
    <ligand>
        <name>NADP(+)</name>
        <dbReference type="ChEBI" id="CHEBI:58349"/>
    </ligand>
</feature>
<feature type="binding site" evidence="1">
    <location>
        <begin position="38"/>
        <end position="39"/>
    </location>
    <ligand>
        <name>NADP(+)</name>
        <dbReference type="ChEBI" id="CHEBI:58349"/>
    </ligand>
</feature>
<feature type="binding site" evidence="1">
    <location>
        <position position="101"/>
    </location>
    <ligand>
        <name>phosphate</name>
        <dbReference type="ChEBI" id="CHEBI:43474"/>
    </ligand>
</feature>
<feature type="binding site" evidence="1">
    <location>
        <position position="158"/>
    </location>
    <ligand>
        <name>substrate</name>
    </ligand>
</feature>
<feature type="binding site" evidence="1">
    <location>
        <begin position="161"/>
        <end position="162"/>
    </location>
    <ligand>
        <name>NADP(+)</name>
        <dbReference type="ChEBI" id="CHEBI:58349"/>
    </ligand>
</feature>
<feature type="binding site" evidence="1">
    <location>
        <position position="228"/>
    </location>
    <ligand>
        <name>phosphate</name>
        <dbReference type="ChEBI" id="CHEBI:43474"/>
    </ligand>
</feature>
<feature type="binding site" evidence="1">
    <location>
        <position position="250"/>
    </location>
    <ligand>
        <name>substrate</name>
    </ligand>
</feature>
<feature type="binding site" evidence="1">
    <location>
        <position position="326"/>
    </location>
    <ligand>
        <name>NADP(+)</name>
        <dbReference type="ChEBI" id="CHEBI:58349"/>
    </ligand>
</feature>
<protein>
    <recommendedName>
        <fullName evidence="1">Aspartate-semialdehyde dehydrogenase</fullName>
        <shortName evidence="1">ASA dehydrogenase</shortName>
        <shortName evidence="1">ASADH</shortName>
        <ecNumber evidence="1">1.2.1.11</ecNumber>
    </recommendedName>
    <alternativeName>
        <fullName evidence="1">Aspartate-beta-semialdehyde dehydrogenase</fullName>
    </alternativeName>
</protein>
<reference key="1">
    <citation type="journal article" date="1995" name="J. Bacteriol.">
        <title>Multicopy suppression by asd gene and osmotic stress-dependent complementation by heterologous proA in proA mutants.</title>
        <authorList>
            <person name="Serebrijski I."/>
            <person name="Wojcik F."/>
            <person name="Reyes O."/>
            <person name="Leblon G."/>
        </authorList>
    </citation>
    <scope>NUCLEOTIDE SEQUENCE [GENOMIC DNA]</scope>
    <source>
        <strain>ATCC 17965 / AS B-4821</strain>
    </source>
</reference>
<keyword id="KW-0028">Amino-acid biosynthesis</keyword>
<keyword id="KW-0220">Diaminopimelate biosynthesis</keyword>
<keyword id="KW-0457">Lysine biosynthesis</keyword>
<keyword id="KW-0486">Methionine biosynthesis</keyword>
<keyword id="KW-0521">NADP</keyword>
<keyword id="KW-0560">Oxidoreductase</keyword>
<keyword id="KW-0791">Threonine biosynthesis</keyword>
<sequence length="344" mass="36226">MTTIAVVGATGQVGQVMRTLLEERNFPADTVRFFASPRSAGRKIEFRGTEIEVEDITQATEESLKDIDVALFSAGGTASKQYAPLFAAAGATVVDNSSAWRKDDEVPLIVSEVNPSDKDSLVKGIIANPNCTTMAAMPVLKPLHDAAGLVKLHVSSYQAVSGSGLAGVETLAKQVAAVGDHNVEFVHDGQAADAGDVGPYVSPIAYNVLPFAGNLVDDGTFETDEEQKLRNESRKILGLPDLKVSGTCVRVPVFTGHTLTIHAEFDKAITVEQAQEILGAASGVKLVDVPTPLAAAGIDESLVGRIRQDSTVDDNRGLVLVVSGDNLRKGAALNTIQIAELLVK</sequence>
<dbReference type="EC" id="1.2.1.11" evidence="1"/>
<dbReference type="EMBL" id="X82928">
    <property type="protein sequence ID" value="CAA58101.1"/>
    <property type="molecule type" value="Genomic_DNA"/>
</dbReference>
<dbReference type="PIR" id="S49978">
    <property type="entry name" value="S49978"/>
</dbReference>
<dbReference type="SMR" id="P0C1D9"/>
<dbReference type="UniPathway" id="UPA00034">
    <property type="reaction ID" value="UER00016"/>
</dbReference>
<dbReference type="UniPathway" id="UPA00050">
    <property type="reaction ID" value="UER00463"/>
</dbReference>
<dbReference type="UniPathway" id="UPA00051">
    <property type="reaction ID" value="UER00464"/>
</dbReference>
<dbReference type="GO" id="GO:0004073">
    <property type="term" value="F:aspartate-semialdehyde dehydrogenase activity"/>
    <property type="evidence" value="ECO:0007669"/>
    <property type="project" value="UniProtKB-UniRule"/>
</dbReference>
<dbReference type="GO" id="GO:0051287">
    <property type="term" value="F:NAD binding"/>
    <property type="evidence" value="ECO:0007669"/>
    <property type="project" value="InterPro"/>
</dbReference>
<dbReference type="GO" id="GO:0050661">
    <property type="term" value="F:NADP binding"/>
    <property type="evidence" value="ECO:0007669"/>
    <property type="project" value="UniProtKB-UniRule"/>
</dbReference>
<dbReference type="GO" id="GO:0046983">
    <property type="term" value="F:protein dimerization activity"/>
    <property type="evidence" value="ECO:0007669"/>
    <property type="project" value="InterPro"/>
</dbReference>
<dbReference type="GO" id="GO:0071266">
    <property type="term" value="P:'de novo' L-methionine biosynthetic process"/>
    <property type="evidence" value="ECO:0007669"/>
    <property type="project" value="UniProtKB-UniRule"/>
</dbReference>
<dbReference type="GO" id="GO:0019877">
    <property type="term" value="P:diaminopimelate biosynthetic process"/>
    <property type="evidence" value="ECO:0007669"/>
    <property type="project" value="UniProtKB-UniRule"/>
</dbReference>
<dbReference type="GO" id="GO:0009097">
    <property type="term" value="P:isoleucine biosynthetic process"/>
    <property type="evidence" value="ECO:0007669"/>
    <property type="project" value="InterPro"/>
</dbReference>
<dbReference type="GO" id="GO:0009089">
    <property type="term" value="P:lysine biosynthetic process via diaminopimelate"/>
    <property type="evidence" value="ECO:0007669"/>
    <property type="project" value="UniProtKB-UniRule"/>
</dbReference>
<dbReference type="GO" id="GO:0009088">
    <property type="term" value="P:threonine biosynthetic process"/>
    <property type="evidence" value="ECO:0007669"/>
    <property type="project" value="UniProtKB-UniRule"/>
</dbReference>
<dbReference type="CDD" id="cd18131">
    <property type="entry name" value="ASADH_C_bac_euk_like"/>
    <property type="match status" value="1"/>
</dbReference>
<dbReference type="CDD" id="cd02316">
    <property type="entry name" value="VcASADH2_like_N"/>
    <property type="match status" value="1"/>
</dbReference>
<dbReference type="Gene3D" id="3.30.360.10">
    <property type="entry name" value="Dihydrodipicolinate Reductase, domain 2"/>
    <property type="match status" value="1"/>
</dbReference>
<dbReference type="Gene3D" id="3.40.50.720">
    <property type="entry name" value="NAD(P)-binding Rossmann-like Domain"/>
    <property type="match status" value="1"/>
</dbReference>
<dbReference type="HAMAP" id="MF_02121">
    <property type="entry name" value="ASADH"/>
    <property type="match status" value="1"/>
</dbReference>
<dbReference type="InterPro" id="IPR000319">
    <property type="entry name" value="Asp-semialdehyde_DH_CS"/>
</dbReference>
<dbReference type="InterPro" id="IPR012080">
    <property type="entry name" value="Asp_semialdehyde_DH"/>
</dbReference>
<dbReference type="InterPro" id="IPR005986">
    <property type="entry name" value="Asp_semialdehyde_DH_beta"/>
</dbReference>
<dbReference type="InterPro" id="IPR036291">
    <property type="entry name" value="NAD(P)-bd_dom_sf"/>
</dbReference>
<dbReference type="InterPro" id="IPR000534">
    <property type="entry name" value="Semialdehyde_DH_NAD-bd"/>
</dbReference>
<dbReference type="InterPro" id="IPR012280">
    <property type="entry name" value="Semialdhyde_DH_dimer_dom"/>
</dbReference>
<dbReference type="NCBIfam" id="TIGR01296">
    <property type="entry name" value="asd_B"/>
    <property type="match status" value="1"/>
</dbReference>
<dbReference type="NCBIfam" id="NF011456">
    <property type="entry name" value="PRK14874.1"/>
    <property type="match status" value="1"/>
</dbReference>
<dbReference type="PANTHER" id="PTHR46278:SF2">
    <property type="entry name" value="ASPARTATE-SEMIALDEHYDE DEHYDROGENASE"/>
    <property type="match status" value="1"/>
</dbReference>
<dbReference type="PANTHER" id="PTHR46278">
    <property type="entry name" value="DEHYDROGENASE, PUTATIVE-RELATED"/>
    <property type="match status" value="1"/>
</dbReference>
<dbReference type="Pfam" id="PF01118">
    <property type="entry name" value="Semialdhyde_dh"/>
    <property type="match status" value="1"/>
</dbReference>
<dbReference type="Pfam" id="PF02774">
    <property type="entry name" value="Semialdhyde_dhC"/>
    <property type="match status" value="1"/>
</dbReference>
<dbReference type="PIRSF" id="PIRSF000148">
    <property type="entry name" value="ASA_dh"/>
    <property type="match status" value="1"/>
</dbReference>
<dbReference type="SMART" id="SM00859">
    <property type="entry name" value="Semialdhyde_dh"/>
    <property type="match status" value="1"/>
</dbReference>
<dbReference type="SUPFAM" id="SSF55347">
    <property type="entry name" value="Glyceraldehyde-3-phosphate dehydrogenase-like, C-terminal domain"/>
    <property type="match status" value="1"/>
</dbReference>
<dbReference type="SUPFAM" id="SSF51735">
    <property type="entry name" value="NAD(P)-binding Rossmann-fold domains"/>
    <property type="match status" value="1"/>
</dbReference>
<dbReference type="PROSITE" id="PS01103">
    <property type="entry name" value="ASD"/>
    <property type="match status" value="1"/>
</dbReference>
<gene>
    <name evidence="1" type="primary">asd</name>
</gene>
<proteinExistence type="inferred from homology"/>